<keyword id="KW-1185">Reference proteome</keyword>
<organismHost>
    <name type="scientific">Bos taurus</name>
    <name type="common">Bovine</name>
    <dbReference type="NCBI Taxonomy" id="9913"/>
</organismHost>
<organismHost>
    <name type="scientific">Culicoides brevitarsis</name>
    <dbReference type="NCBI Taxonomy" id="469753"/>
</organismHost>
<reference key="1">
    <citation type="journal article" date="2011" name="J. Gen. Virol.">
        <title>Tibrogargan and Coastal Plains rhabdoviruses: genomic characterization, evolution of novel genes and seroprevalence in Australian livestock.</title>
        <authorList>
            <person name="Gubala A."/>
            <person name="Davis S."/>
            <person name="Weir R."/>
            <person name="Melville L."/>
            <person name="Cowled C."/>
            <person name="Boyle D."/>
        </authorList>
    </citation>
    <scope>NUCLEOTIDE SEQUENCE [GENOMIC RNA]</scope>
    <source>
        <strain>CS132</strain>
    </source>
</reference>
<gene>
    <name type="primary">U2</name>
</gene>
<name>U2_TIBVC</name>
<accession>D8V074</accession>
<sequence length="149" mass="17087">MATQAHLLVSYYYDISSEGVPGVPINTICHGLEFDYMGNNTTDDLEKVFLGSILRADLRGSGYYSYIRLVNEGKICLKIAFDQSLNWTLSGEKEFKSDFRVGSGTISVTFKCYWLRVSEKIWKGSLYKFDTTKNPQVLVYRLLEPKKQR</sequence>
<comment type="similarity">
    <text evidence="1">Belongs to the tibrovirus protein U2 family.</text>
</comment>
<evidence type="ECO:0000305" key="1">
    <source>
    </source>
</evidence>
<organism>
    <name type="scientific">Tibrogargan virus (strain CS132)</name>
    <name type="common">TIBV</name>
    <dbReference type="NCBI Taxonomy" id="1559361"/>
    <lineage>
        <taxon>Viruses</taxon>
        <taxon>Riboviria</taxon>
        <taxon>Orthornavirae</taxon>
        <taxon>Negarnaviricota</taxon>
        <taxon>Haploviricotina</taxon>
        <taxon>Monjiviricetes</taxon>
        <taxon>Mononegavirales</taxon>
        <taxon>Rhabdoviridae</taxon>
        <taxon>Alpharhabdovirinae</taxon>
        <taxon>Tibrovirus</taxon>
        <taxon>Tibrovirus tibrogargan</taxon>
    </lineage>
</organism>
<feature type="chain" id="PRO_0000432057" description="Protein U2">
    <location>
        <begin position="1"/>
        <end position="149"/>
    </location>
</feature>
<protein>
    <recommendedName>
        <fullName>Protein U2</fullName>
    </recommendedName>
</protein>
<dbReference type="EMBL" id="GQ294472">
    <property type="protein sequence ID" value="ADG86351.1"/>
    <property type="molecule type" value="Viral_cRNA"/>
</dbReference>
<dbReference type="RefSeq" id="YP_007641372.1">
    <property type="nucleotide sequence ID" value="NC_020804.1"/>
</dbReference>
<dbReference type="GeneID" id="14857902"/>
<dbReference type="KEGG" id="vg:14857902"/>
<dbReference type="Proteomes" id="UP000029770">
    <property type="component" value="Segment"/>
</dbReference>
<proteinExistence type="inferred from homology"/>